<name>SURE_CHLAD</name>
<keyword id="KW-0963">Cytoplasm</keyword>
<keyword id="KW-0378">Hydrolase</keyword>
<keyword id="KW-0479">Metal-binding</keyword>
<keyword id="KW-0547">Nucleotide-binding</keyword>
<comment type="function">
    <text evidence="1">Nucleotidase that shows phosphatase activity on nucleoside 5'-monophosphates.</text>
</comment>
<comment type="catalytic activity">
    <reaction evidence="1">
        <text>a ribonucleoside 5'-phosphate + H2O = a ribonucleoside + phosphate</text>
        <dbReference type="Rhea" id="RHEA:12484"/>
        <dbReference type="ChEBI" id="CHEBI:15377"/>
        <dbReference type="ChEBI" id="CHEBI:18254"/>
        <dbReference type="ChEBI" id="CHEBI:43474"/>
        <dbReference type="ChEBI" id="CHEBI:58043"/>
        <dbReference type="EC" id="3.1.3.5"/>
    </reaction>
</comment>
<comment type="cofactor">
    <cofactor evidence="1">
        <name>a divalent metal cation</name>
        <dbReference type="ChEBI" id="CHEBI:60240"/>
    </cofactor>
    <text evidence="1">Binds 1 divalent metal cation per subunit.</text>
</comment>
<comment type="subcellular location">
    <subcellularLocation>
        <location evidence="1">Cytoplasm</location>
    </subcellularLocation>
</comment>
<comment type="similarity">
    <text evidence="1">Belongs to the SurE nucleotidase family.</text>
</comment>
<protein>
    <recommendedName>
        <fullName evidence="1">5'-nucleotidase SurE</fullName>
        <ecNumber evidence="1">3.1.3.5</ecNumber>
    </recommendedName>
    <alternativeName>
        <fullName evidence="1">Nucleoside 5'-monophosphate phosphohydrolase</fullName>
    </alternativeName>
</protein>
<evidence type="ECO:0000255" key="1">
    <source>
        <dbReference type="HAMAP-Rule" id="MF_00060"/>
    </source>
</evidence>
<dbReference type="EC" id="3.1.3.5" evidence="1"/>
<dbReference type="EMBL" id="CP001337">
    <property type="protein sequence ID" value="ACL23646.1"/>
    <property type="molecule type" value="Genomic_DNA"/>
</dbReference>
<dbReference type="RefSeq" id="WP_012616012.1">
    <property type="nucleotide sequence ID" value="NC_011831.1"/>
</dbReference>
<dbReference type="SMR" id="B8G513"/>
<dbReference type="STRING" id="326427.Cagg_0722"/>
<dbReference type="KEGG" id="cag:Cagg_0722"/>
<dbReference type="eggNOG" id="COG0496">
    <property type="taxonomic scope" value="Bacteria"/>
</dbReference>
<dbReference type="HOGENOM" id="CLU_045192_1_3_0"/>
<dbReference type="OrthoDB" id="9780815at2"/>
<dbReference type="Proteomes" id="UP000002508">
    <property type="component" value="Chromosome"/>
</dbReference>
<dbReference type="GO" id="GO:0005737">
    <property type="term" value="C:cytoplasm"/>
    <property type="evidence" value="ECO:0007669"/>
    <property type="project" value="UniProtKB-SubCell"/>
</dbReference>
<dbReference type="GO" id="GO:0008254">
    <property type="term" value="F:3'-nucleotidase activity"/>
    <property type="evidence" value="ECO:0007669"/>
    <property type="project" value="TreeGrafter"/>
</dbReference>
<dbReference type="GO" id="GO:0008253">
    <property type="term" value="F:5'-nucleotidase activity"/>
    <property type="evidence" value="ECO:0007669"/>
    <property type="project" value="UniProtKB-UniRule"/>
</dbReference>
<dbReference type="GO" id="GO:0004309">
    <property type="term" value="F:exopolyphosphatase activity"/>
    <property type="evidence" value="ECO:0007669"/>
    <property type="project" value="TreeGrafter"/>
</dbReference>
<dbReference type="GO" id="GO:0046872">
    <property type="term" value="F:metal ion binding"/>
    <property type="evidence" value="ECO:0007669"/>
    <property type="project" value="UniProtKB-UniRule"/>
</dbReference>
<dbReference type="GO" id="GO:0000166">
    <property type="term" value="F:nucleotide binding"/>
    <property type="evidence" value="ECO:0007669"/>
    <property type="project" value="UniProtKB-KW"/>
</dbReference>
<dbReference type="FunFam" id="3.40.1210.10:FF:000001">
    <property type="entry name" value="5'/3'-nucleotidase SurE"/>
    <property type="match status" value="1"/>
</dbReference>
<dbReference type="Gene3D" id="3.40.1210.10">
    <property type="entry name" value="Survival protein SurE-like phosphatase/nucleotidase"/>
    <property type="match status" value="1"/>
</dbReference>
<dbReference type="HAMAP" id="MF_00060">
    <property type="entry name" value="SurE"/>
    <property type="match status" value="1"/>
</dbReference>
<dbReference type="InterPro" id="IPR030048">
    <property type="entry name" value="SurE"/>
</dbReference>
<dbReference type="InterPro" id="IPR002828">
    <property type="entry name" value="SurE-like_Pase/nucleotidase"/>
</dbReference>
<dbReference type="InterPro" id="IPR036523">
    <property type="entry name" value="SurE-like_sf"/>
</dbReference>
<dbReference type="NCBIfam" id="NF001490">
    <property type="entry name" value="PRK00346.1-4"/>
    <property type="match status" value="1"/>
</dbReference>
<dbReference type="NCBIfam" id="TIGR00087">
    <property type="entry name" value="surE"/>
    <property type="match status" value="1"/>
</dbReference>
<dbReference type="PANTHER" id="PTHR30457">
    <property type="entry name" value="5'-NUCLEOTIDASE SURE"/>
    <property type="match status" value="1"/>
</dbReference>
<dbReference type="PANTHER" id="PTHR30457:SF12">
    <property type="entry name" value="5'_3'-NUCLEOTIDASE SURE"/>
    <property type="match status" value="1"/>
</dbReference>
<dbReference type="Pfam" id="PF01975">
    <property type="entry name" value="SurE"/>
    <property type="match status" value="1"/>
</dbReference>
<dbReference type="SUPFAM" id="SSF64167">
    <property type="entry name" value="SurE-like"/>
    <property type="match status" value="1"/>
</dbReference>
<gene>
    <name evidence="1" type="primary">surE</name>
    <name type="ordered locus">Cagg_0722</name>
</gene>
<proteinExistence type="inferred from homology"/>
<organism>
    <name type="scientific">Chloroflexus aggregans (strain MD-66 / DSM 9485)</name>
    <dbReference type="NCBI Taxonomy" id="326427"/>
    <lineage>
        <taxon>Bacteria</taxon>
        <taxon>Bacillati</taxon>
        <taxon>Chloroflexota</taxon>
        <taxon>Chloroflexia</taxon>
        <taxon>Chloroflexales</taxon>
        <taxon>Chloroflexineae</taxon>
        <taxon>Chloroflexaceae</taxon>
        <taxon>Chloroflexus</taxon>
    </lineage>
</organism>
<feature type="chain" id="PRO_1000196587" description="5'-nucleotidase SurE">
    <location>
        <begin position="1"/>
        <end position="253"/>
    </location>
</feature>
<feature type="binding site" evidence="1">
    <location>
        <position position="8"/>
    </location>
    <ligand>
        <name>a divalent metal cation</name>
        <dbReference type="ChEBI" id="CHEBI:60240"/>
    </ligand>
</feature>
<feature type="binding site" evidence="1">
    <location>
        <position position="9"/>
    </location>
    <ligand>
        <name>a divalent metal cation</name>
        <dbReference type="ChEBI" id="CHEBI:60240"/>
    </ligand>
</feature>
<feature type="binding site" evidence="1">
    <location>
        <position position="39"/>
    </location>
    <ligand>
        <name>a divalent metal cation</name>
        <dbReference type="ChEBI" id="CHEBI:60240"/>
    </ligand>
</feature>
<feature type="binding site" evidence="1">
    <location>
        <position position="95"/>
    </location>
    <ligand>
        <name>a divalent metal cation</name>
        <dbReference type="ChEBI" id="CHEBI:60240"/>
    </ligand>
</feature>
<sequence>MYILVTNDDGYQSPGLAALRAVLSEIGEVAVVAPDRNWSAAGHYRKLFDPLRAWEGTLSDGSPALICDGTPADCVALAILGLLDRKPDLVVSGINLGANLGTDLLYSGTVAAAMEGIVFGVPGLAVSQIRPKDGQWDFRAAQVAVRRLVMLIRERGLPPELLLNLNIPAVTPETLRGIKVSRLGRRVYRDELVVRYDPRGRPYYWIDGAEPEDHCEEGTDIAAISEGYASLTPVQMDLTSHRWLEELRRWEWE</sequence>
<accession>B8G513</accession>
<reference key="1">
    <citation type="submission" date="2008-12" db="EMBL/GenBank/DDBJ databases">
        <title>Complete sequence of Chloroflexus aggregans DSM 9485.</title>
        <authorList>
            <consortium name="US DOE Joint Genome Institute"/>
            <person name="Lucas S."/>
            <person name="Copeland A."/>
            <person name="Lapidus A."/>
            <person name="Glavina del Rio T."/>
            <person name="Dalin E."/>
            <person name="Tice H."/>
            <person name="Pitluck S."/>
            <person name="Foster B."/>
            <person name="Larimer F."/>
            <person name="Land M."/>
            <person name="Hauser L."/>
            <person name="Kyrpides N."/>
            <person name="Mikhailova N."/>
            <person name="Bryant D.A."/>
            <person name="Richardson P."/>
        </authorList>
    </citation>
    <scope>NUCLEOTIDE SEQUENCE [LARGE SCALE GENOMIC DNA]</scope>
    <source>
        <strain>MD-66 / DSM 9485</strain>
    </source>
</reference>